<accession>Q4R7K1</accession>
<evidence type="ECO:0000250" key="1"/>
<evidence type="ECO:0000250" key="2">
    <source>
        <dbReference type="UniProtKB" id="O43148"/>
    </source>
</evidence>
<evidence type="ECO:0000250" key="3">
    <source>
        <dbReference type="UniProtKB" id="Q5U2U7"/>
    </source>
</evidence>
<evidence type="ECO:0000250" key="4">
    <source>
        <dbReference type="UniProtKB" id="Q9D0L8"/>
    </source>
</evidence>
<evidence type="ECO:0000255" key="5">
    <source>
        <dbReference type="PROSITE-ProRule" id="PRU00895"/>
    </source>
</evidence>
<evidence type="ECO:0000256" key="6">
    <source>
        <dbReference type="SAM" id="MobiDB-lite"/>
    </source>
</evidence>
<comment type="function">
    <text evidence="2">Catalytic subunit of the mRNA-capping methyltransferase RNMT:RAMAC complex that methylates the N7 position of the added guanosine to the 5'-cap structure of mRNAs. Binds RNA containing 5'-terminal GpppC.</text>
</comment>
<comment type="catalytic activity">
    <reaction evidence="2 5">
        <text>a 5'-end (5'-triphosphoguanosine)-ribonucleoside in mRNA + S-adenosyl-L-methionine = a 5'-end (N(7)-methyl 5'-triphosphoguanosine)-ribonucleoside in mRNA + S-adenosyl-L-homocysteine</text>
        <dbReference type="Rhea" id="RHEA:67008"/>
        <dbReference type="Rhea" id="RHEA-COMP:17166"/>
        <dbReference type="Rhea" id="RHEA-COMP:17167"/>
        <dbReference type="ChEBI" id="CHEBI:57856"/>
        <dbReference type="ChEBI" id="CHEBI:59789"/>
        <dbReference type="ChEBI" id="CHEBI:156461"/>
        <dbReference type="ChEBI" id="CHEBI:167617"/>
        <dbReference type="EC" id="2.1.1.56"/>
    </reaction>
</comment>
<comment type="activity regulation">
    <text evidence="2">Methyltransferase activity is activated by RAMAC.</text>
</comment>
<comment type="subunit">
    <text evidence="2">Interacts with importin alpha, leading to stimulate both RNA-binding and methyltransferase activity. Interaction with importin alpha and beta is required for its nuclear localization, importin beta dissociating in response to RanGTP, allowing RNMT-importin alpha to bind RNA substrates. Interacts with elongating form of polymerase II and RNGTT. Interacts with RAMAC, this interaction significantly enhances RNA-binding and cap methyltransferase activity.</text>
</comment>
<comment type="subcellular location">
    <subcellularLocation>
        <location evidence="2">Nucleus</location>
    </subcellularLocation>
</comment>
<comment type="similarity">
    <text evidence="5">Belongs to the class I-like SAM-binding methyltransferase superfamily. mRNA cap 0 methyltransferase family.</text>
</comment>
<organism>
    <name type="scientific">Macaca fascicularis</name>
    <name type="common">Crab-eating macaque</name>
    <name type="synonym">Cynomolgus monkey</name>
    <dbReference type="NCBI Taxonomy" id="9541"/>
    <lineage>
        <taxon>Eukaryota</taxon>
        <taxon>Metazoa</taxon>
        <taxon>Chordata</taxon>
        <taxon>Craniata</taxon>
        <taxon>Vertebrata</taxon>
        <taxon>Euteleostomi</taxon>
        <taxon>Mammalia</taxon>
        <taxon>Eutheria</taxon>
        <taxon>Euarchontoglires</taxon>
        <taxon>Primates</taxon>
        <taxon>Haplorrhini</taxon>
        <taxon>Catarrhini</taxon>
        <taxon>Cercopithecidae</taxon>
        <taxon>Cercopithecinae</taxon>
        <taxon>Macaca</taxon>
    </lineage>
</organism>
<name>MCES_MACFA</name>
<sequence length="476" mass="54797">MANSTKAEEYEKMSVEQAKASVNSEAESSFSINENTTASGTGLSGKTSVCRQVDTARKRKEFEDDLVKESSSCGEGTPSKKRKLDPEIVPEEKDCGDDEGNSKKRKRETEDVPKDEYSTGDGTQNKRKIALEDVPEKQKNLEEGHSSAVAAHYNELQEVGLEKRSQSRIFYLRNFNNWMKSVLIGEFLEKVRQKKKRDITVLDLGCGKGGDLLKWKKGRINKLVCTDIADVSIKQCQQRYEDMKNRRDSEYIFSAEFITADCSKELLIEKFRDPQMCFDICSCQFVCHYSFESYEQADMMLRNACERLSPGGYFIGTTPNSFELIRRLEASETESFGNEIYTVKFQKKGDYPLFGCKYDFNLEGVVDVPEFLVYFPLLNEMAKKYNMKLVYKKTFLEFYEEKIKNNENKMLLKRMQALEPYPANESSKLVSERVDDYEHAAKYMKNSQVKLPLGTLSKSEWEATSIYLVFAFEKQQ</sequence>
<proteinExistence type="evidence at transcript level"/>
<dbReference type="EC" id="2.1.1.56" evidence="2"/>
<dbReference type="EMBL" id="AB168817">
    <property type="protein sequence ID" value="BAE00921.1"/>
    <property type="molecule type" value="mRNA"/>
</dbReference>
<dbReference type="RefSeq" id="NP_001270332.1">
    <property type="nucleotide sequence ID" value="NM_001283403.1"/>
</dbReference>
<dbReference type="RefSeq" id="XP_005587335.3">
    <property type="nucleotide sequence ID" value="XM_005587278.4"/>
</dbReference>
<dbReference type="RefSeq" id="XP_015295261.3">
    <property type="nucleotide sequence ID" value="XM_015439775.3"/>
</dbReference>
<dbReference type="SMR" id="Q4R7K1"/>
<dbReference type="STRING" id="9541.ENSMFAP00000030499"/>
<dbReference type="Ensembl" id="ENSMFAT00000004697.2">
    <property type="protein sequence ID" value="ENSMFAP00000030491.1"/>
    <property type="gene ID" value="ENSMFAG00000042388.2"/>
</dbReference>
<dbReference type="GeneID" id="101865006"/>
<dbReference type="KEGG" id="mcf:101865006"/>
<dbReference type="CTD" id="8731"/>
<dbReference type="VEuPathDB" id="HostDB:ENSMFAG00000042388"/>
<dbReference type="eggNOG" id="KOG1975">
    <property type="taxonomic scope" value="Eukaryota"/>
</dbReference>
<dbReference type="GeneTree" id="ENSGT00390000002368"/>
<dbReference type="OMA" id="LITGDCF"/>
<dbReference type="Proteomes" id="UP000233100">
    <property type="component" value="Chromosome 18"/>
</dbReference>
<dbReference type="Bgee" id="ENSMFAG00000042388">
    <property type="expression patterns" value="Expressed in cerebellum and 13 other cell types or tissues"/>
</dbReference>
<dbReference type="GO" id="GO:0160130">
    <property type="term" value="C:mRNA cap methyltransferase RNMT:RAMAC complex"/>
    <property type="evidence" value="ECO:0000250"/>
    <property type="project" value="UniProtKB"/>
</dbReference>
<dbReference type="GO" id="GO:0005634">
    <property type="term" value="C:nucleus"/>
    <property type="evidence" value="ECO:0000250"/>
    <property type="project" value="UniProtKB"/>
</dbReference>
<dbReference type="GO" id="GO:0004482">
    <property type="term" value="F:mRNA 5'-cap (guanine-N7-)-methyltransferase activity"/>
    <property type="evidence" value="ECO:0000250"/>
    <property type="project" value="UniProtKB"/>
</dbReference>
<dbReference type="GO" id="GO:0003723">
    <property type="term" value="F:RNA binding"/>
    <property type="evidence" value="ECO:0000250"/>
    <property type="project" value="UniProtKB"/>
</dbReference>
<dbReference type="GO" id="GO:0006370">
    <property type="term" value="P:7-methylguanosine mRNA capping"/>
    <property type="evidence" value="ECO:0000250"/>
    <property type="project" value="UniProtKB"/>
</dbReference>
<dbReference type="CDD" id="cd02440">
    <property type="entry name" value="AdoMet_MTases"/>
    <property type="match status" value="1"/>
</dbReference>
<dbReference type="Gene3D" id="3.40.50.150">
    <property type="entry name" value="Vaccinia Virus protein VP39"/>
    <property type="match status" value="1"/>
</dbReference>
<dbReference type="InterPro" id="IPR004971">
    <property type="entry name" value="mRNA_G-N7_MeTrfase_dom"/>
</dbReference>
<dbReference type="InterPro" id="IPR016899">
    <property type="entry name" value="mRNA_G-N7_MeTrfase_euk"/>
</dbReference>
<dbReference type="InterPro" id="IPR039753">
    <property type="entry name" value="RG7MT1"/>
</dbReference>
<dbReference type="InterPro" id="IPR029063">
    <property type="entry name" value="SAM-dependent_MTases_sf"/>
</dbReference>
<dbReference type="PANTHER" id="PTHR12189:SF2">
    <property type="entry name" value="MRNA CAP GUANINE-N7 METHYLTRANSFERASE"/>
    <property type="match status" value="1"/>
</dbReference>
<dbReference type="PANTHER" id="PTHR12189">
    <property type="entry name" value="MRNA GUANINE-7- METHYLTRANSFERASE"/>
    <property type="match status" value="1"/>
</dbReference>
<dbReference type="Pfam" id="PF03291">
    <property type="entry name" value="mRNA_G-N7_MeTrfase"/>
    <property type="match status" value="1"/>
</dbReference>
<dbReference type="PIRSF" id="PIRSF028762">
    <property type="entry name" value="ABD1"/>
    <property type="match status" value="1"/>
</dbReference>
<dbReference type="SUPFAM" id="SSF53335">
    <property type="entry name" value="S-adenosyl-L-methionine-dependent methyltransferases"/>
    <property type="match status" value="1"/>
</dbReference>
<dbReference type="PROSITE" id="PS51562">
    <property type="entry name" value="RNA_CAP0_MT"/>
    <property type="match status" value="1"/>
</dbReference>
<keyword id="KW-0489">Methyltransferase</keyword>
<keyword id="KW-0506">mRNA capping</keyword>
<keyword id="KW-0507">mRNA processing</keyword>
<keyword id="KW-0539">Nucleus</keyword>
<keyword id="KW-0597">Phosphoprotein</keyword>
<keyword id="KW-1185">Reference proteome</keyword>
<keyword id="KW-0694">RNA-binding</keyword>
<keyword id="KW-0949">S-adenosyl-L-methionine</keyword>
<keyword id="KW-0808">Transferase</keyword>
<gene>
    <name type="primary">RNMT</name>
    <name type="ORF">QtsA-15044</name>
</gene>
<feature type="chain" id="PRO_0000248322" description="mRNA cap guanine-N(7) methyltransferase">
    <location>
        <begin position="1"/>
        <end position="476"/>
    </location>
</feature>
<feature type="domain" description="mRNA cap 0 methyltransferase" evidence="5">
    <location>
        <begin position="167"/>
        <end position="475"/>
    </location>
</feature>
<feature type="region of interest" description="Disordered" evidence="6">
    <location>
        <begin position="1"/>
        <end position="128"/>
    </location>
</feature>
<feature type="short sequence motif" description="Nuclear localization signal" evidence="1">
    <location>
        <begin position="126"/>
        <end position="128"/>
    </location>
</feature>
<feature type="compositionally biased region" description="Basic and acidic residues" evidence="6">
    <location>
        <begin position="1"/>
        <end position="14"/>
    </location>
</feature>
<feature type="compositionally biased region" description="Polar residues" evidence="6">
    <location>
        <begin position="20"/>
        <end position="50"/>
    </location>
</feature>
<feature type="compositionally biased region" description="Basic and acidic residues" evidence="6">
    <location>
        <begin position="54"/>
        <end position="68"/>
    </location>
</feature>
<feature type="compositionally biased region" description="Basic and acidic residues" evidence="6">
    <location>
        <begin position="84"/>
        <end position="93"/>
    </location>
</feature>
<feature type="compositionally biased region" description="Basic and acidic residues" evidence="6">
    <location>
        <begin position="107"/>
        <end position="117"/>
    </location>
</feature>
<feature type="binding site" evidence="5">
    <location>
        <begin position="176"/>
        <end position="177"/>
    </location>
    <ligand>
        <name>mRNA</name>
        <dbReference type="ChEBI" id="CHEBI:33699"/>
    </ligand>
    <ligandPart>
        <name>mRNA cap</name>
    </ligandPart>
</feature>
<feature type="binding site" evidence="5">
    <location>
        <position position="180"/>
    </location>
    <ligand>
        <name>S-adenosyl-L-methionine</name>
        <dbReference type="ChEBI" id="CHEBI:59789"/>
    </ligand>
</feature>
<feature type="binding site" evidence="5">
    <location>
        <position position="205"/>
    </location>
    <ligand>
        <name>S-adenosyl-L-methionine</name>
        <dbReference type="ChEBI" id="CHEBI:59789"/>
    </ligand>
</feature>
<feature type="binding site" evidence="5">
    <location>
        <position position="227"/>
    </location>
    <ligand>
        <name>S-adenosyl-L-methionine</name>
        <dbReference type="ChEBI" id="CHEBI:59789"/>
    </ligand>
</feature>
<feature type="binding site" evidence="2">
    <location>
        <position position="261"/>
    </location>
    <ligand>
        <name>S-adenosyl-L-methionine</name>
        <dbReference type="ChEBI" id="CHEBI:59789"/>
    </ligand>
</feature>
<feature type="binding site" evidence="2">
    <location>
        <position position="284"/>
    </location>
    <ligand>
        <name>S-adenosyl-L-methionine</name>
        <dbReference type="ChEBI" id="CHEBI:59789"/>
    </ligand>
</feature>
<feature type="binding site" evidence="2">
    <location>
        <position position="289"/>
    </location>
    <ligand>
        <name>S-adenosyl-L-methionine</name>
        <dbReference type="ChEBI" id="CHEBI:59789"/>
    </ligand>
</feature>
<feature type="site" description="mRNA cap binding" evidence="5">
    <location>
        <position position="208"/>
    </location>
</feature>
<feature type="site" description="mRNA cap binding" evidence="5">
    <location>
        <position position="214"/>
    </location>
</feature>
<feature type="site" description="mRNA cap binding" evidence="5">
    <location>
        <position position="239"/>
    </location>
</feature>
<feature type="site" description="mRNA cap binding" evidence="5">
    <location>
        <position position="288"/>
    </location>
</feature>
<feature type="site" description="mRNA cap binding" evidence="5">
    <location>
        <position position="370"/>
    </location>
</feature>
<feature type="site" description="mRNA cap binding" evidence="5">
    <location>
        <position position="467"/>
    </location>
</feature>
<feature type="modified residue" description="Phosphoserine" evidence="4">
    <location>
        <position position="24"/>
    </location>
</feature>
<feature type="modified residue" description="Phosphoserine" evidence="4">
    <location>
        <position position="28"/>
    </location>
</feature>
<feature type="modified residue" description="Phosphoserine" evidence="3">
    <location>
        <position position="29"/>
    </location>
</feature>
<feature type="modified residue" description="Phosphoserine" evidence="3">
    <location>
        <position position="118"/>
    </location>
</feature>
<reference key="1">
    <citation type="submission" date="2005-06" db="EMBL/GenBank/DDBJ databases">
        <title>DNA sequences of macaque genes expressed in brain or testis and its evolutionary implications.</title>
        <authorList>
            <consortium name="International consortium for macaque cDNA sequencing and analysis"/>
        </authorList>
    </citation>
    <scope>NUCLEOTIDE SEQUENCE [LARGE SCALE MRNA]</scope>
    <source>
        <tissue>Testis</tissue>
    </source>
</reference>
<protein>
    <recommendedName>
        <fullName>mRNA cap guanine-N(7) methyltransferase</fullName>
        <ecNumber evidence="2">2.1.1.56</ecNumber>
    </recommendedName>
    <alternativeName>
        <fullName>RG7MT1</fullName>
    </alternativeName>
    <alternativeName>
        <fullName>mRNA (guanine-N(7))-methyltransferase</fullName>
    </alternativeName>
    <alternativeName>
        <fullName>mRNA cap methyltransferase</fullName>
    </alternativeName>
</protein>